<dbReference type="EC" id="2.7.4.22" evidence="1"/>
<dbReference type="EMBL" id="AE017285">
    <property type="protein sequence ID" value="AAS95351.1"/>
    <property type="molecule type" value="Genomic_DNA"/>
</dbReference>
<dbReference type="RefSeq" id="WP_010938170.1">
    <property type="nucleotide sequence ID" value="NC_002937.3"/>
</dbReference>
<dbReference type="RefSeq" id="YP_010092.1">
    <property type="nucleotide sequence ID" value="NC_002937.3"/>
</dbReference>
<dbReference type="SMR" id="Q72DQ8"/>
<dbReference type="STRING" id="882.DVU_0871"/>
<dbReference type="PaxDb" id="882-DVU_0871"/>
<dbReference type="EnsemblBacteria" id="AAS95351">
    <property type="protein sequence ID" value="AAS95351"/>
    <property type="gene ID" value="DVU_0871"/>
</dbReference>
<dbReference type="KEGG" id="dvu:DVU_0871"/>
<dbReference type="PATRIC" id="fig|882.5.peg.816"/>
<dbReference type="eggNOG" id="COG0528">
    <property type="taxonomic scope" value="Bacteria"/>
</dbReference>
<dbReference type="HOGENOM" id="CLU_033861_0_0_7"/>
<dbReference type="OrthoDB" id="9807458at2"/>
<dbReference type="PhylomeDB" id="Q72DQ8"/>
<dbReference type="UniPathway" id="UPA00159">
    <property type="reaction ID" value="UER00275"/>
</dbReference>
<dbReference type="Proteomes" id="UP000002194">
    <property type="component" value="Chromosome"/>
</dbReference>
<dbReference type="GO" id="GO:0005737">
    <property type="term" value="C:cytoplasm"/>
    <property type="evidence" value="ECO:0007669"/>
    <property type="project" value="UniProtKB-SubCell"/>
</dbReference>
<dbReference type="GO" id="GO:0005524">
    <property type="term" value="F:ATP binding"/>
    <property type="evidence" value="ECO:0007669"/>
    <property type="project" value="UniProtKB-KW"/>
</dbReference>
<dbReference type="GO" id="GO:0033862">
    <property type="term" value="F:UMP kinase activity"/>
    <property type="evidence" value="ECO:0007669"/>
    <property type="project" value="UniProtKB-EC"/>
</dbReference>
<dbReference type="GO" id="GO:0044210">
    <property type="term" value="P:'de novo' CTP biosynthetic process"/>
    <property type="evidence" value="ECO:0007669"/>
    <property type="project" value="UniProtKB-UniRule"/>
</dbReference>
<dbReference type="GO" id="GO:0006225">
    <property type="term" value="P:UDP biosynthetic process"/>
    <property type="evidence" value="ECO:0007669"/>
    <property type="project" value="TreeGrafter"/>
</dbReference>
<dbReference type="CDD" id="cd04254">
    <property type="entry name" value="AAK_UMPK-PyrH-Ec"/>
    <property type="match status" value="1"/>
</dbReference>
<dbReference type="FunFam" id="3.40.1160.10:FF:000001">
    <property type="entry name" value="Uridylate kinase"/>
    <property type="match status" value="1"/>
</dbReference>
<dbReference type="Gene3D" id="3.40.1160.10">
    <property type="entry name" value="Acetylglutamate kinase-like"/>
    <property type="match status" value="1"/>
</dbReference>
<dbReference type="HAMAP" id="MF_01220_B">
    <property type="entry name" value="PyrH_B"/>
    <property type="match status" value="1"/>
</dbReference>
<dbReference type="InterPro" id="IPR036393">
    <property type="entry name" value="AceGlu_kinase-like_sf"/>
</dbReference>
<dbReference type="InterPro" id="IPR001048">
    <property type="entry name" value="Asp/Glu/Uridylate_kinase"/>
</dbReference>
<dbReference type="InterPro" id="IPR011817">
    <property type="entry name" value="Uridylate_kinase"/>
</dbReference>
<dbReference type="InterPro" id="IPR015963">
    <property type="entry name" value="Uridylate_kinase_bac"/>
</dbReference>
<dbReference type="NCBIfam" id="TIGR02075">
    <property type="entry name" value="pyrH_bact"/>
    <property type="match status" value="1"/>
</dbReference>
<dbReference type="PANTHER" id="PTHR42833">
    <property type="entry name" value="URIDYLATE KINASE"/>
    <property type="match status" value="1"/>
</dbReference>
<dbReference type="PANTHER" id="PTHR42833:SF4">
    <property type="entry name" value="URIDYLATE KINASE PUMPKIN, CHLOROPLASTIC"/>
    <property type="match status" value="1"/>
</dbReference>
<dbReference type="Pfam" id="PF00696">
    <property type="entry name" value="AA_kinase"/>
    <property type="match status" value="1"/>
</dbReference>
<dbReference type="PIRSF" id="PIRSF005650">
    <property type="entry name" value="Uridylate_kin"/>
    <property type="match status" value="1"/>
</dbReference>
<dbReference type="SUPFAM" id="SSF53633">
    <property type="entry name" value="Carbamate kinase-like"/>
    <property type="match status" value="1"/>
</dbReference>
<keyword id="KW-0067">ATP-binding</keyword>
<keyword id="KW-0963">Cytoplasm</keyword>
<keyword id="KW-0418">Kinase</keyword>
<keyword id="KW-0547">Nucleotide-binding</keyword>
<keyword id="KW-0665">Pyrimidine biosynthesis</keyword>
<keyword id="KW-1185">Reference proteome</keyword>
<keyword id="KW-0808">Transferase</keyword>
<organism>
    <name type="scientific">Nitratidesulfovibrio vulgaris (strain ATCC 29579 / DSM 644 / CCUG 34227 / NCIMB 8303 / VKM B-1760 / Hildenborough)</name>
    <name type="common">Desulfovibrio vulgaris</name>
    <dbReference type="NCBI Taxonomy" id="882"/>
    <lineage>
        <taxon>Bacteria</taxon>
        <taxon>Pseudomonadati</taxon>
        <taxon>Thermodesulfobacteriota</taxon>
        <taxon>Desulfovibrionia</taxon>
        <taxon>Desulfovibrionales</taxon>
        <taxon>Desulfovibrionaceae</taxon>
        <taxon>Nitratidesulfovibrio</taxon>
    </lineage>
</organism>
<accession>Q72DQ8</accession>
<feature type="chain" id="PRO_0000323838" description="Uridylate kinase">
    <location>
        <begin position="1"/>
        <end position="238"/>
    </location>
</feature>
<feature type="binding site" evidence="1">
    <location>
        <begin position="12"/>
        <end position="15"/>
    </location>
    <ligand>
        <name>ATP</name>
        <dbReference type="ChEBI" id="CHEBI:30616"/>
    </ligand>
</feature>
<feature type="binding site" evidence="1">
    <location>
        <position position="54"/>
    </location>
    <ligand>
        <name>UMP</name>
        <dbReference type="ChEBI" id="CHEBI:57865"/>
    </ligand>
</feature>
<feature type="binding site" evidence="1">
    <location>
        <position position="55"/>
    </location>
    <ligand>
        <name>ATP</name>
        <dbReference type="ChEBI" id="CHEBI:30616"/>
    </ligand>
</feature>
<feature type="binding site" evidence="1">
    <location>
        <position position="59"/>
    </location>
    <ligand>
        <name>ATP</name>
        <dbReference type="ChEBI" id="CHEBI:30616"/>
    </ligand>
</feature>
<feature type="binding site" evidence="1">
    <location>
        <position position="74"/>
    </location>
    <ligand>
        <name>UMP</name>
        <dbReference type="ChEBI" id="CHEBI:57865"/>
    </ligand>
</feature>
<feature type="binding site" evidence="1">
    <location>
        <begin position="135"/>
        <end position="142"/>
    </location>
    <ligand>
        <name>UMP</name>
        <dbReference type="ChEBI" id="CHEBI:57865"/>
    </ligand>
</feature>
<feature type="binding site" evidence="1">
    <location>
        <position position="162"/>
    </location>
    <ligand>
        <name>ATP</name>
        <dbReference type="ChEBI" id="CHEBI:30616"/>
    </ligand>
</feature>
<feature type="binding site" evidence="1">
    <location>
        <position position="168"/>
    </location>
    <ligand>
        <name>ATP</name>
        <dbReference type="ChEBI" id="CHEBI:30616"/>
    </ligand>
</feature>
<feature type="binding site" evidence="1">
    <location>
        <position position="171"/>
    </location>
    <ligand>
        <name>ATP</name>
        <dbReference type="ChEBI" id="CHEBI:30616"/>
    </ligand>
</feature>
<comment type="function">
    <text evidence="1">Catalyzes the reversible phosphorylation of UMP to UDP.</text>
</comment>
<comment type="catalytic activity">
    <reaction evidence="1">
        <text>UMP + ATP = UDP + ADP</text>
        <dbReference type="Rhea" id="RHEA:24400"/>
        <dbReference type="ChEBI" id="CHEBI:30616"/>
        <dbReference type="ChEBI" id="CHEBI:57865"/>
        <dbReference type="ChEBI" id="CHEBI:58223"/>
        <dbReference type="ChEBI" id="CHEBI:456216"/>
        <dbReference type="EC" id="2.7.4.22"/>
    </reaction>
</comment>
<comment type="activity regulation">
    <text evidence="1">Inhibited by UTP.</text>
</comment>
<comment type="pathway">
    <text evidence="1">Pyrimidine metabolism; CTP biosynthesis via de novo pathway; UDP from UMP (UMPK route): step 1/1.</text>
</comment>
<comment type="subunit">
    <text evidence="1">Homohexamer.</text>
</comment>
<comment type="subcellular location">
    <subcellularLocation>
        <location evidence="1">Cytoplasm</location>
    </subcellularLocation>
</comment>
<comment type="similarity">
    <text evidence="1">Belongs to the UMP kinase family.</text>
</comment>
<proteinExistence type="inferred from homology"/>
<protein>
    <recommendedName>
        <fullName evidence="1">Uridylate kinase</fullName>
        <shortName evidence="1">UK</shortName>
        <ecNumber evidence="1">2.7.4.22</ecNumber>
    </recommendedName>
    <alternativeName>
        <fullName evidence="1">Uridine monophosphate kinase</fullName>
        <shortName evidence="1">UMP kinase</shortName>
        <shortName evidence="1">UMPK</shortName>
    </alternativeName>
</protein>
<sequence length="238" mass="25722">MSELKYKRVLLKLSGEALAGENKFGIDPATVSKICHEIADVVDMGLQVALVIGGGNIFRGLSSSAKGMDRSSADYMGMLATVLNALAVQDALEKLGHPTRVLSAITMQEVCEPYIRRRAERHLEKGRVVICAAGTGNPYFTTDTAAALRGMELKCEAIIKATKVDGVYDKDPMKHDDAVLFPRLTYVETLQRKLGVMDSTAITLAMENEVPIIVCNMFKGSIKRVVCGEEVGTIVQGG</sequence>
<name>PYRH_NITV2</name>
<gene>
    <name evidence="1" type="primary">pyrH</name>
    <name type="ordered locus">DVU_0871</name>
</gene>
<evidence type="ECO:0000255" key="1">
    <source>
        <dbReference type="HAMAP-Rule" id="MF_01220"/>
    </source>
</evidence>
<reference key="1">
    <citation type="journal article" date="2004" name="Nat. Biotechnol.">
        <title>The genome sequence of the anaerobic, sulfate-reducing bacterium Desulfovibrio vulgaris Hildenborough.</title>
        <authorList>
            <person name="Heidelberg J.F."/>
            <person name="Seshadri R."/>
            <person name="Haveman S.A."/>
            <person name="Hemme C.L."/>
            <person name="Paulsen I.T."/>
            <person name="Kolonay J.F."/>
            <person name="Eisen J.A."/>
            <person name="Ward N.L."/>
            <person name="Methe B.A."/>
            <person name="Brinkac L.M."/>
            <person name="Daugherty S.C."/>
            <person name="DeBoy R.T."/>
            <person name="Dodson R.J."/>
            <person name="Durkin A.S."/>
            <person name="Madupu R."/>
            <person name="Nelson W.C."/>
            <person name="Sullivan S.A."/>
            <person name="Fouts D.E."/>
            <person name="Haft D.H."/>
            <person name="Selengut J."/>
            <person name="Peterson J.D."/>
            <person name="Davidsen T.M."/>
            <person name="Zafar N."/>
            <person name="Zhou L."/>
            <person name="Radune D."/>
            <person name="Dimitrov G."/>
            <person name="Hance M."/>
            <person name="Tran K."/>
            <person name="Khouri H.M."/>
            <person name="Gill J."/>
            <person name="Utterback T.R."/>
            <person name="Feldblyum T.V."/>
            <person name="Wall J.D."/>
            <person name="Voordouw G."/>
            <person name="Fraser C.M."/>
        </authorList>
    </citation>
    <scope>NUCLEOTIDE SEQUENCE [LARGE SCALE GENOMIC DNA]</scope>
    <source>
        <strain>ATCC 29579 / DSM 644 / CCUG 34227 / NCIMB 8303 / VKM B-1760 / Hildenborough</strain>
    </source>
</reference>